<keyword id="KW-0001">2Fe-2S</keyword>
<keyword id="KW-0963">Cytoplasm</keyword>
<keyword id="KW-0408">Iron</keyword>
<keyword id="KW-0411">Iron-sulfur</keyword>
<keyword id="KW-0479">Metal-binding</keyword>
<keyword id="KW-0663">Pyridoxal phosphate</keyword>
<keyword id="KW-1185">Reference proteome</keyword>
<keyword id="KW-0808">Transferase</keyword>
<gene>
    <name evidence="1" type="primary">iscS</name>
    <name type="ordered locus">Sfri_2424</name>
</gene>
<protein>
    <recommendedName>
        <fullName evidence="1">Cysteine desulfurase IscS</fullName>
        <ecNumber evidence="1">2.8.1.7</ecNumber>
    </recommendedName>
</protein>
<organism>
    <name type="scientific">Shewanella frigidimarina (strain NCIMB 400)</name>
    <dbReference type="NCBI Taxonomy" id="318167"/>
    <lineage>
        <taxon>Bacteria</taxon>
        <taxon>Pseudomonadati</taxon>
        <taxon>Pseudomonadota</taxon>
        <taxon>Gammaproteobacteria</taxon>
        <taxon>Alteromonadales</taxon>
        <taxon>Shewanellaceae</taxon>
        <taxon>Shewanella</taxon>
    </lineage>
</organism>
<accession>Q080P6</accession>
<reference key="1">
    <citation type="submission" date="2006-08" db="EMBL/GenBank/DDBJ databases">
        <title>Complete sequence of Shewanella frigidimarina NCIMB 400.</title>
        <authorList>
            <consortium name="US DOE Joint Genome Institute"/>
            <person name="Copeland A."/>
            <person name="Lucas S."/>
            <person name="Lapidus A."/>
            <person name="Barry K."/>
            <person name="Detter J.C."/>
            <person name="Glavina del Rio T."/>
            <person name="Hammon N."/>
            <person name="Israni S."/>
            <person name="Dalin E."/>
            <person name="Tice H."/>
            <person name="Pitluck S."/>
            <person name="Fredrickson J.K."/>
            <person name="Kolker E."/>
            <person name="McCuel L.A."/>
            <person name="DiChristina T."/>
            <person name="Nealson K.H."/>
            <person name="Newman D."/>
            <person name="Tiedje J.M."/>
            <person name="Zhou J."/>
            <person name="Romine M.F."/>
            <person name="Culley D.E."/>
            <person name="Serres M."/>
            <person name="Chertkov O."/>
            <person name="Brettin T."/>
            <person name="Bruce D."/>
            <person name="Han C."/>
            <person name="Tapia R."/>
            <person name="Gilna P."/>
            <person name="Schmutz J."/>
            <person name="Larimer F."/>
            <person name="Land M."/>
            <person name="Hauser L."/>
            <person name="Kyrpides N."/>
            <person name="Mikhailova N."/>
            <person name="Richardson P."/>
        </authorList>
    </citation>
    <scope>NUCLEOTIDE SEQUENCE [LARGE SCALE GENOMIC DNA]</scope>
    <source>
        <strain>NCIMB 400</strain>
    </source>
</reference>
<comment type="function">
    <text evidence="1">Master enzyme that delivers sulfur to a number of partners involved in Fe-S cluster assembly, tRNA modification or cofactor biosynthesis. Catalyzes the removal of elemental sulfur atoms from cysteine to produce alanine. Functions as a sulfur delivery protein for Fe-S cluster synthesis onto IscU, an Fe-S scaffold assembly protein, as well as other S acceptor proteins.</text>
</comment>
<comment type="catalytic activity">
    <reaction evidence="1">
        <text>(sulfur carrier)-H + L-cysteine = (sulfur carrier)-SH + L-alanine</text>
        <dbReference type="Rhea" id="RHEA:43892"/>
        <dbReference type="Rhea" id="RHEA-COMP:14737"/>
        <dbReference type="Rhea" id="RHEA-COMP:14739"/>
        <dbReference type="ChEBI" id="CHEBI:29917"/>
        <dbReference type="ChEBI" id="CHEBI:35235"/>
        <dbReference type="ChEBI" id="CHEBI:57972"/>
        <dbReference type="ChEBI" id="CHEBI:64428"/>
        <dbReference type="EC" id="2.8.1.7"/>
    </reaction>
</comment>
<comment type="cofactor">
    <cofactor evidence="1">
        <name>pyridoxal 5'-phosphate</name>
        <dbReference type="ChEBI" id="CHEBI:597326"/>
    </cofactor>
</comment>
<comment type="pathway">
    <text evidence="1">Cofactor biosynthesis; iron-sulfur cluster biosynthesis.</text>
</comment>
<comment type="subunit">
    <text evidence="1">Homodimer. Forms a heterotetramer with IscU, interacts with other sulfur acceptors.</text>
</comment>
<comment type="subcellular location">
    <subcellularLocation>
        <location evidence="1">Cytoplasm</location>
    </subcellularLocation>
</comment>
<comment type="similarity">
    <text evidence="1">Belongs to the class-V pyridoxal-phosphate-dependent aminotransferase family. NifS/IscS subfamily.</text>
</comment>
<name>ISCS_SHEFN</name>
<proteinExistence type="inferred from homology"/>
<sequence>MKLPIYLDYAATTPVDPRVAEKMMQHMTMDGVFGNPASRSHRYGWQAEEAVDVARNQVADLINADHREIVFTSGATESSNLAIKGIAHFYHKKGKHIITSKTEHKATLDTCRQLEREGYEVTYLVPDANGIIPMERLEAAMRDDTILVSIMHVNNEIGVIHDINAIGELCRSKGIFFHMDAAQSAGKIPIDVQTTKVDLISISGHKMYGPKGIGALYVRRKPRIRLESQMHGGGHERGMRSGTLATHQIVGLGEAAAVAKQDMAADSARITHLRDKLWNGIKHIEETYINGDMEQRYSGIFNVSFNFVEGESLMMALKDLAVSSGSACTSASLEPSYVLRALGLNDEMAHSSIRFSIGRFTTDEEIDHAIKTITESIDKLREMSPLWEMFKDGIDLEQVQWAHH</sequence>
<feature type="chain" id="PRO_1000019444" description="Cysteine desulfurase IscS">
    <location>
        <begin position="1"/>
        <end position="404"/>
    </location>
</feature>
<feature type="active site" description="Cysteine persulfide intermediate" evidence="1">
    <location>
        <position position="328"/>
    </location>
</feature>
<feature type="binding site" evidence="1">
    <location>
        <begin position="75"/>
        <end position="76"/>
    </location>
    <ligand>
        <name>pyridoxal 5'-phosphate</name>
        <dbReference type="ChEBI" id="CHEBI:597326"/>
    </ligand>
</feature>
<feature type="binding site" evidence="1">
    <location>
        <position position="155"/>
    </location>
    <ligand>
        <name>pyridoxal 5'-phosphate</name>
        <dbReference type="ChEBI" id="CHEBI:597326"/>
    </ligand>
</feature>
<feature type="binding site" evidence="1">
    <location>
        <position position="183"/>
    </location>
    <ligand>
        <name>pyridoxal 5'-phosphate</name>
        <dbReference type="ChEBI" id="CHEBI:597326"/>
    </ligand>
</feature>
<feature type="binding site" evidence="1">
    <location>
        <begin position="203"/>
        <end position="205"/>
    </location>
    <ligand>
        <name>pyridoxal 5'-phosphate</name>
        <dbReference type="ChEBI" id="CHEBI:597326"/>
    </ligand>
</feature>
<feature type="binding site" evidence="1">
    <location>
        <position position="243"/>
    </location>
    <ligand>
        <name>pyridoxal 5'-phosphate</name>
        <dbReference type="ChEBI" id="CHEBI:597326"/>
    </ligand>
</feature>
<feature type="binding site" description="via persulfide group" evidence="1">
    <location>
        <position position="328"/>
    </location>
    <ligand>
        <name>[2Fe-2S] cluster</name>
        <dbReference type="ChEBI" id="CHEBI:190135"/>
        <note>ligand shared with IscU</note>
    </ligand>
</feature>
<feature type="modified residue" description="N6-(pyridoxal phosphate)lysine" evidence="1">
    <location>
        <position position="206"/>
    </location>
</feature>
<dbReference type="EC" id="2.8.1.7" evidence="1"/>
<dbReference type="EMBL" id="CP000447">
    <property type="protein sequence ID" value="ABI72269.1"/>
    <property type="molecule type" value="Genomic_DNA"/>
</dbReference>
<dbReference type="RefSeq" id="WP_011637878.1">
    <property type="nucleotide sequence ID" value="NC_008345.1"/>
</dbReference>
<dbReference type="SMR" id="Q080P6"/>
<dbReference type="STRING" id="318167.Sfri_2424"/>
<dbReference type="KEGG" id="sfr:Sfri_2424"/>
<dbReference type="eggNOG" id="COG1104">
    <property type="taxonomic scope" value="Bacteria"/>
</dbReference>
<dbReference type="HOGENOM" id="CLU_003433_0_2_6"/>
<dbReference type="OrthoDB" id="9808002at2"/>
<dbReference type="UniPathway" id="UPA00266"/>
<dbReference type="Proteomes" id="UP000000684">
    <property type="component" value="Chromosome"/>
</dbReference>
<dbReference type="GO" id="GO:1990221">
    <property type="term" value="C:L-cysteine desulfurase complex"/>
    <property type="evidence" value="ECO:0007669"/>
    <property type="project" value="UniProtKB-ARBA"/>
</dbReference>
<dbReference type="GO" id="GO:0051537">
    <property type="term" value="F:2 iron, 2 sulfur cluster binding"/>
    <property type="evidence" value="ECO:0007669"/>
    <property type="project" value="UniProtKB-UniRule"/>
</dbReference>
<dbReference type="GO" id="GO:0031071">
    <property type="term" value="F:cysteine desulfurase activity"/>
    <property type="evidence" value="ECO:0007669"/>
    <property type="project" value="UniProtKB-UniRule"/>
</dbReference>
<dbReference type="GO" id="GO:0046872">
    <property type="term" value="F:metal ion binding"/>
    <property type="evidence" value="ECO:0007669"/>
    <property type="project" value="UniProtKB-KW"/>
</dbReference>
<dbReference type="GO" id="GO:0030170">
    <property type="term" value="F:pyridoxal phosphate binding"/>
    <property type="evidence" value="ECO:0007669"/>
    <property type="project" value="UniProtKB-UniRule"/>
</dbReference>
<dbReference type="GO" id="GO:0044571">
    <property type="term" value="P:[2Fe-2S] cluster assembly"/>
    <property type="evidence" value="ECO:0007669"/>
    <property type="project" value="UniProtKB-UniRule"/>
</dbReference>
<dbReference type="FunFam" id="3.40.640.10:FF:000003">
    <property type="entry name" value="Cysteine desulfurase IscS"/>
    <property type="match status" value="1"/>
</dbReference>
<dbReference type="FunFam" id="3.90.1150.10:FF:000002">
    <property type="entry name" value="Cysteine desulfurase IscS"/>
    <property type="match status" value="1"/>
</dbReference>
<dbReference type="Gene3D" id="3.90.1150.10">
    <property type="entry name" value="Aspartate Aminotransferase, domain 1"/>
    <property type="match status" value="1"/>
</dbReference>
<dbReference type="Gene3D" id="3.40.640.10">
    <property type="entry name" value="Type I PLP-dependent aspartate aminotransferase-like (Major domain)"/>
    <property type="match status" value="1"/>
</dbReference>
<dbReference type="HAMAP" id="MF_00331">
    <property type="entry name" value="Cys_desulf_IscS"/>
    <property type="match status" value="1"/>
</dbReference>
<dbReference type="InterPro" id="IPR000192">
    <property type="entry name" value="Aminotrans_V_dom"/>
</dbReference>
<dbReference type="InterPro" id="IPR020578">
    <property type="entry name" value="Aminotrans_V_PyrdxlP_BS"/>
</dbReference>
<dbReference type="InterPro" id="IPR010240">
    <property type="entry name" value="Cys_deSase_IscS"/>
</dbReference>
<dbReference type="InterPro" id="IPR016454">
    <property type="entry name" value="Cysteine_dSase"/>
</dbReference>
<dbReference type="InterPro" id="IPR015424">
    <property type="entry name" value="PyrdxlP-dep_Trfase"/>
</dbReference>
<dbReference type="InterPro" id="IPR015421">
    <property type="entry name" value="PyrdxlP-dep_Trfase_major"/>
</dbReference>
<dbReference type="InterPro" id="IPR015422">
    <property type="entry name" value="PyrdxlP-dep_Trfase_small"/>
</dbReference>
<dbReference type="NCBIfam" id="TIGR02006">
    <property type="entry name" value="IscS"/>
    <property type="match status" value="1"/>
</dbReference>
<dbReference type="NCBIfam" id="NF002806">
    <property type="entry name" value="PRK02948.1"/>
    <property type="match status" value="1"/>
</dbReference>
<dbReference type="NCBIfam" id="NF010611">
    <property type="entry name" value="PRK14012.1"/>
    <property type="match status" value="1"/>
</dbReference>
<dbReference type="PANTHER" id="PTHR11601:SF34">
    <property type="entry name" value="CYSTEINE DESULFURASE"/>
    <property type="match status" value="1"/>
</dbReference>
<dbReference type="PANTHER" id="PTHR11601">
    <property type="entry name" value="CYSTEINE DESULFURYLASE FAMILY MEMBER"/>
    <property type="match status" value="1"/>
</dbReference>
<dbReference type="Pfam" id="PF00266">
    <property type="entry name" value="Aminotran_5"/>
    <property type="match status" value="1"/>
</dbReference>
<dbReference type="PIRSF" id="PIRSF005572">
    <property type="entry name" value="NifS"/>
    <property type="match status" value="1"/>
</dbReference>
<dbReference type="SUPFAM" id="SSF53383">
    <property type="entry name" value="PLP-dependent transferases"/>
    <property type="match status" value="1"/>
</dbReference>
<dbReference type="PROSITE" id="PS00595">
    <property type="entry name" value="AA_TRANSFER_CLASS_5"/>
    <property type="match status" value="1"/>
</dbReference>
<evidence type="ECO:0000255" key="1">
    <source>
        <dbReference type="HAMAP-Rule" id="MF_00331"/>
    </source>
</evidence>